<accession>Q3SZ70</accession>
<name>CV039_BOVIN</name>
<evidence type="ECO:0000250" key="1">
    <source>
        <dbReference type="UniProtKB" id="Q3U595"/>
    </source>
</evidence>
<evidence type="ECO:0000256" key="2">
    <source>
        <dbReference type="SAM" id="MobiDB-lite"/>
    </source>
</evidence>
<evidence type="ECO:0000305" key="3"/>
<reference key="1">
    <citation type="submission" date="2005-08" db="EMBL/GenBank/DDBJ databases">
        <authorList>
            <consortium name="NIH - Mammalian Gene Collection (MGC) project"/>
        </authorList>
    </citation>
    <scope>NUCLEOTIDE SEQUENCE [LARGE SCALE MRNA]</scope>
    <source>
        <strain>Crossbred X Angus</strain>
        <tissue>Ileum</tissue>
    </source>
</reference>
<feature type="chain" id="PRO_0000326129" description="Synaptic plasticity regulator PANTS">
    <location>
        <begin position="1"/>
        <end position="104"/>
    </location>
</feature>
<feature type="region of interest" description="Disordered" evidence="2">
    <location>
        <begin position="58"/>
        <end position="104"/>
    </location>
</feature>
<feature type="compositionally biased region" description="Basic and acidic residues" evidence="2">
    <location>
        <begin position="95"/>
        <end position="104"/>
    </location>
</feature>
<dbReference type="EMBL" id="BC103087">
    <property type="protein sequence ID" value="AAI03088.1"/>
    <property type="molecule type" value="mRNA"/>
</dbReference>
<dbReference type="RefSeq" id="NP_001035621.1">
    <property type="nucleotide sequence ID" value="NM_001040531.2"/>
</dbReference>
<dbReference type="FunCoup" id="Q3SZ70">
    <property type="interactions" value="62"/>
</dbReference>
<dbReference type="STRING" id="9913.ENSBTAP00000072398"/>
<dbReference type="PaxDb" id="9913-ENSBTAP00000041465"/>
<dbReference type="GeneID" id="515651"/>
<dbReference type="KEGG" id="bta:515651"/>
<dbReference type="CTD" id="515651"/>
<dbReference type="eggNOG" id="ENOG502S4W2">
    <property type="taxonomic scope" value="Eukaryota"/>
</dbReference>
<dbReference type="HOGENOM" id="CLU_2249099_0_0_1"/>
<dbReference type="InParanoid" id="Q3SZ70"/>
<dbReference type="OrthoDB" id="5946508at2759"/>
<dbReference type="TreeFam" id="TF324380"/>
<dbReference type="Proteomes" id="UP000009136">
    <property type="component" value="Unplaced"/>
</dbReference>
<dbReference type="GO" id="GO:0045202">
    <property type="term" value="C:synapse"/>
    <property type="evidence" value="ECO:0000250"/>
    <property type="project" value="UniProtKB"/>
</dbReference>
<dbReference type="GO" id="GO:0043083">
    <property type="term" value="C:synaptic cleft"/>
    <property type="evidence" value="ECO:0000250"/>
    <property type="project" value="UniProtKB"/>
</dbReference>
<dbReference type="GO" id="GO:1900272">
    <property type="term" value="P:negative regulation of long-term synaptic potentiation"/>
    <property type="evidence" value="ECO:0000250"/>
    <property type="project" value="UniProtKB"/>
</dbReference>
<dbReference type="GO" id="GO:0048167">
    <property type="term" value="P:regulation of synaptic plasticity"/>
    <property type="evidence" value="ECO:0000250"/>
    <property type="project" value="UniProtKB"/>
</dbReference>
<dbReference type="InterPro" id="IPR021475">
    <property type="entry name" value="Pants/Emi1-like"/>
</dbReference>
<dbReference type="PANTHER" id="PTHR28052">
    <property type="entry name" value="UPF0545 PROTEIN C22ORF39"/>
    <property type="match status" value="1"/>
</dbReference>
<dbReference type="PANTHER" id="PTHR28052:SF1">
    <property type="entry name" value="UPF0545 PROTEIN C22ORF39"/>
    <property type="match status" value="1"/>
</dbReference>
<dbReference type="Pfam" id="PF11326">
    <property type="entry name" value="PANTS-like"/>
    <property type="match status" value="1"/>
</dbReference>
<proteinExistence type="inferred from homology"/>
<sequence>MAEGEGWRPPRPCEAYRAEWELCRSAGHFLRHYYVHGERPACGQWRRDLASCREWEERRSAEAQADSLPPGPEGEPRVAGAGPNAVTGILTRNQGTERPHGDTR</sequence>
<comment type="function">
    <text evidence="1">Negatively regulates long-term potentiation and modulates adult synaptic plasticity. Stabilizes the interaction of RTN4 isoform A/Nogo-A with its receptors, inhibiting clustering of postsynaptic AMPA receptors at synaptic sites. Upon neuronal stimulation, degraded at synapses, reducing RTN4 signaling and allowing AMPA receptor clustering at individual synapses.</text>
</comment>
<comment type="subunit">
    <text evidence="1">Interacts with RTN4 isoform A/Nogo-A; the interaction results in enhanced RTN4-mediated inhibition of AMPA receptor clustering. Also interacts with NCAM1, RANBP2 and CCT8.</text>
</comment>
<comment type="subcellular location">
    <subcellularLocation>
        <location evidence="1">Synapse</location>
    </subcellularLocation>
    <subcellularLocation>
        <location evidence="1">Synaptic cleft</location>
    </subcellularLocation>
    <text evidence="1">Detected in both the presynaptic and postsynaptic regions of the synapse and is secreted from neurons into the synaptic cleft. May be released by neuronal dense core vesicles which mediate the release of cleaved neuropeptides.</text>
</comment>
<comment type="PTM">
    <text evidence="1">Rapidly degraded by proteolysis following neuronal stimulation, resulting in increased AMPA receptor clustering.</text>
</comment>
<comment type="similarity">
    <text evidence="3">Belongs to the UPF0545 family.</text>
</comment>
<keyword id="KW-1185">Reference proteome</keyword>
<keyword id="KW-0964">Secreted</keyword>
<keyword id="KW-0770">Synapse</keyword>
<organism>
    <name type="scientific">Bos taurus</name>
    <name type="common">Bovine</name>
    <dbReference type="NCBI Taxonomy" id="9913"/>
    <lineage>
        <taxon>Eukaryota</taxon>
        <taxon>Metazoa</taxon>
        <taxon>Chordata</taxon>
        <taxon>Craniata</taxon>
        <taxon>Vertebrata</taxon>
        <taxon>Euteleostomi</taxon>
        <taxon>Mammalia</taxon>
        <taxon>Eutheria</taxon>
        <taxon>Laurasiatheria</taxon>
        <taxon>Artiodactyla</taxon>
        <taxon>Ruminantia</taxon>
        <taxon>Pecora</taxon>
        <taxon>Bovidae</taxon>
        <taxon>Bovinae</taxon>
        <taxon>Bos</taxon>
    </lineage>
</organism>
<protein>
    <recommendedName>
        <fullName evidence="1">Synaptic plasticity regulator PANTS</fullName>
    </recommendedName>
    <alternativeName>
        <fullName evidence="1">Plasticity-associated neural transcript short</fullName>
    </alternativeName>
</protein>